<sequence>MSILQIGAGGVGWVVAHKAAQNNDVLGDITIASRSIAKCEKIIESIKGKNNLKDSSKKLEARQVNADDIESLVKLINEVKPDLVINAGPPWVNVAIMEACYQAKVSYLDTSVSVDLCSKGQQVPEAYDAQWAFRDKFKQAGITAILSAGFDPGVVSVFAAYAAKYLFDEIDTIDVLDINAGDHGKKFATNFDPETNLLEIQGDSIYWDAGEWKRVPCHTRMLEFDFPKCGKFKVYSMSHDELRSLKEFIPAKRIEFWMGFGDRYLNYFNMMRDIGLLSPEPLTLQDGTVVKPLQVLKAMLPDPTSLAPGYKGLTCIGTWVQGKKDGKARSVFIYNHADHEVAYHDVEHQAIAYTTGVPAITAALQFFRGEWAEPGVFNMEQLNPDPFLETMPSIGLGWDVMELEPGQPDIQVVK</sequence>
<feature type="chain" id="PRO_0000424232" description="Carboxynorspermidine synthase">
    <location>
        <begin position="1"/>
        <end position="414"/>
    </location>
</feature>
<dbReference type="EC" id="1.5.1.43" evidence="4"/>
<dbReference type="EMBL" id="AE003852">
    <property type="protein sequence ID" value="AAF94777.1"/>
    <property type="molecule type" value="Genomic_DNA"/>
</dbReference>
<dbReference type="PIR" id="A82177">
    <property type="entry name" value="A82177"/>
</dbReference>
<dbReference type="RefSeq" id="NP_231263.1">
    <property type="nucleotide sequence ID" value="NC_002505.1"/>
</dbReference>
<dbReference type="RefSeq" id="WP_000025713.1">
    <property type="nucleotide sequence ID" value="NZ_LT906614.1"/>
</dbReference>
<dbReference type="SMR" id="Q9KRL3"/>
<dbReference type="STRING" id="243277.VC_1624"/>
<dbReference type="DNASU" id="2613880"/>
<dbReference type="EnsemblBacteria" id="AAF94777">
    <property type="protein sequence ID" value="AAF94777"/>
    <property type="gene ID" value="VC_1624"/>
</dbReference>
<dbReference type="KEGG" id="vch:VC_1624"/>
<dbReference type="PATRIC" id="fig|243277.26.peg.1552"/>
<dbReference type="eggNOG" id="COG1748">
    <property type="taxonomic scope" value="Bacteria"/>
</dbReference>
<dbReference type="HOGENOM" id="CLU_032114_0_0_6"/>
<dbReference type="BioCyc" id="MetaCyc:FY484_RS08165-MONOMER"/>
<dbReference type="Proteomes" id="UP000000584">
    <property type="component" value="Chromosome 1"/>
</dbReference>
<dbReference type="GO" id="GO:0102143">
    <property type="term" value="F:carboxynorspermidine dehydrogenase activity"/>
    <property type="evidence" value="ECO:0007669"/>
    <property type="project" value="UniProtKB-EC"/>
</dbReference>
<dbReference type="GO" id="GO:0006596">
    <property type="term" value="P:polyamine biosynthetic process"/>
    <property type="evidence" value="ECO:0007669"/>
    <property type="project" value="UniProtKB-KW"/>
</dbReference>
<dbReference type="Gene3D" id="3.30.360.10">
    <property type="entry name" value="Dihydrodipicolinate Reductase, domain 2"/>
    <property type="match status" value="1"/>
</dbReference>
<dbReference type="Gene3D" id="3.40.50.720">
    <property type="entry name" value="NAD(P)-binding Rossmann-like Domain"/>
    <property type="match status" value="1"/>
</dbReference>
<dbReference type="InterPro" id="IPR050050">
    <property type="entry name" value="CANSDH"/>
</dbReference>
<dbReference type="InterPro" id="IPR036291">
    <property type="entry name" value="NAD(P)-bd_dom_sf"/>
</dbReference>
<dbReference type="InterPro" id="IPR032095">
    <property type="entry name" value="Sacchrp_dh-like_C"/>
</dbReference>
<dbReference type="InterPro" id="IPR005097">
    <property type="entry name" value="Sacchrp_dh_NADP-bd"/>
</dbReference>
<dbReference type="NCBIfam" id="NF043000">
    <property type="entry name" value="carsnrspmd_synth"/>
    <property type="match status" value="1"/>
</dbReference>
<dbReference type="PANTHER" id="PTHR43796">
    <property type="entry name" value="CARBOXYNORSPERMIDINE SYNTHASE"/>
    <property type="match status" value="1"/>
</dbReference>
<dbReference type="PANTHER" id="PTHR43796:SF2">
    <property type="entry name" value="CARBOXYNORSPERMIDINE SYNTHASE"/>
    <property type="match status" value="1"/>
</dbReference>
<dbReference type="Pfam" id="PF16653">
    <property type="entry name" value="Sacchrp_dh_C"/>
    <property type="match status" value="1"/>
</dbReference>
<dbReference type="Pfam" id="PF03435">
    <property type="entry name" value="Sacchrp_dh_NADP"/>
    <property type="match status" value="1"/>
</dbReference>
<dbReference type="SUPFAM" id="SSF51735">
    <property type="entry name" value="NAD(P)-binding Rossmann-fold domains"/>
    <property type="match status" value="1"/>
</dbReference>
<keyword id="KW-0521">NADP</keyword>
<keyword id="KW-0560">Oxidoreductase</keyword>
<keyword id="KW-0620">Polyamine biosynthesis</keyword>
<keyword id="KW-1185">Reference proteome</keyword>
<proteinExistence type="evidence at protein level"/>
<comment type="function">
    <text evidence="1">Involved in norspermidine biosynthesis. Catalyzes the synthesis of carboxynorspermidine from L-aspartate 4-semialdehyde and 1,3-diaminopropane. Is also active with putrescine as a substrate. Essential for biofilm formation.</text>
</comment>
<comment type="catalytic activity">
    <reaction evidence="4">
        <text>carboxynorspermidine + NADP(+) + H2O = L-aspartate 4-semialdehyde + propane-1,3-diamine + NADPH + H(+)</text>
        <dbReference type="Rhea" id="RHEA:34115"/>
        <dbReference type="ChEBI" id="CHEBI:15377"/>
        <dbReference type="ChEBI" id="CHEBI:15378"/>
        <dbReference type="ChEBI" id="CHEBI:57484"/>
        <dbReference type="ChEBI" id="CHEBI:57783"/>
        <dbReference type="ChEBI" id="CHEBI:58349"/>
        <dbReference type="ChEBI" id="CHEBI:65070"/>
        <dbReference type="ChEBI" id="CHEBI:537519"/>
        <dbReference type="EC" id="1.5.1.43"/>
    </reaction>
</comment>
<comment type="catalytic activity">
    <reaction evidence="4">
        <text>carboxyspermidine + NADP(+) + H2O = L-aspartate 4-semialdehyde + putrescine + NADPH + H(+)</text>
        <dbReference type="Rhea" id="RHEA:34111"/>
        <dbReference type="ChEBI" id="CHEBI:15377"/>
        <dbReference type="ChEBI" id="CHEBI:15378"/>
        <dbReference type="ChEBI" id="CHEBI:57783"/>
        <dbReference type="ChEBI" id="CHEBI:58349"/>
        <dbReference type="ChEBI" id="CHEBI:65072"/>
        <dbReference type="ChEBI" id="CHEBI:326268"/>
        <dbReference type="ChEBI" id="CHEBI:537519"/>
        <dbReference type="EC" id="1.5.1.43"/>
    </reaction>
</comment>
<comment type="disruption phenotype">
    <text evidence="1">Deletion of the gene abolishes norspermidine and spermidine biosynthesis, and results in increased accumulation of diaminopropane. Deletion leads to a reduction in growth rate of planktonic cells and severely reduced biofilm formation.</text>
</comment>
<comment type="similarity">
    <text evidence="3">Belongs to the saccharopine dehydrogenase family. Carboxynorspermidine synthase subfamily.</text>
</comment>
<protein>
    <recommendedName>
        <fullName evidence="2">Carboxynorspermidine synthase</fullName>
        <shortName evidence="3">C-NSPD synthase</shortName>
        <ecNumber evidence="4">1.5.1.43</ecNumber>
    </recommendedName>
    <alternativeName>
        <fullName evidence="2">Carboxynorspermidine dehydrogenase</fullName>
        <shortName evidence="2">CANSDH</shortName>
    </alternativeName>
</protein>
<name>CANSD_VIBCH</name>
<organism>
    <name type="scientific">Vibrio cholerae serotype O1 (strain ATCC 39315 / El Tor Inaba N16961)</name>
    <dbReference type="NCBI Taxonomy" id="243277"/>
    <lineage>
        <taxon>Bacteria</taxon>
        <taxon>Pseudomonadati</taxon>
        <taxon>Pseudomonadota</taxon>
        <taxon>Gammaproteobacteria</taxon>
        <taxon>Vibrionales</taxon>
        <taxon>Vibrionaceae</taxon>
        <taxon>Vibrio</taxon>
    </lineage>
</organism>
<evidence type="ECO:0000269" key="1">
    <source>
    </source>
</evidence>
<evidence type="ECO:0000303" key="2">
    <source>
    </source>
</evidence>
<evidence type="ECO:0000305" key="3"/>
<evidence type="ECO:0000305" key="4">
    <source>
    </source>
</evidence>
<gene>
    <name type="ordered locus">VC_1624</name>
</gene>
<reference key="1">
    <citation type="journal article" date="2000" name="Nature">
        <title>DNA sequence of both chromosomes of the cholera pathogen Vibrio cholerae.</title>
        <authorList>
            <person name="Heidelberg J.F."/>
            <person name="Eisen J.A."/>
            <person name="Nelson W.C."/>
            <person name="Clayton R.A."/>
            <person name="Gwinn M.L."/>
            <person name="Dodson R.J."/>
            <person name="Haft D.H."/>
            <person name="Hickey E.K."/>
            <person name="Peterson J.D."/>
            <person name="Umayam L.A."/>
            <person name="Gill S.R."/>
            <person name="Nelson K.E."/>
            <person name="Read T.D."/>
            <person name="Tettelin H."/>
            <person name="Richardson D.L."/>
            <person name="Ermolaeva M.D."/>
            <person name="Vamathevan J.J."/>
            <person name="Bass S."/>
            <person name="Qin H."/>
            <person name="Dragoi I."/>
            <person name="Sellers P."/>
            <person name="McDonald L.A."/>
            <person name="Utterback T.R."/>
            <person name="Fleischmann R.D."/>
            <person name="Nierman W.C."/>
            <person name="White O."/>
            <person name="Salzberg S.L."/>
            <person name="Smith H.O."/>
            <person name="Colwell R.R."/>
            <person name="Mekalanos J.J."/>
            <person name="Venter J.C."/>
            <person name="Fraser C.M."/>
        </authorList>
    </citation>
    <scope>NUCLEOTIDE SEQUENCE [LARGE SCALE GENOMIC DNA]</scope>
    <source>
        <strain>ATCC 39315 / El Tor Inaba N16961</strain>
    </source>
</reference>
<reference key="2">
    <citation type="journal article" date="2009" name="J. Biol. Chem.">
        <title>An alternative polyamine biosynthetic pathway is widespread in bacteria and essential for biofilm formation in Vibrio cholerae.</title>
        <authorList>
            <person name="Lee J."/>
            <person name="Sperandio V."/>
            <person name="Frantz D.E."/>
            <person name="Longgood J."/>
            <person name="Camilli A."/>
            <person name="Phillips M.A."/>
            <person name="Michael A.J."/>
        </authorList>
    </citation>
    <scope>FUNCTION</scope>
    <scope>CATALYTIC ACTIVITY</scope>
    <scope>DISRUPTION PHENOTYPE</scope>
</reference>
<accession>Q9KRL3</accession>